<comment type="function">
    <text evidence="1">Part of the ABC transporter complex RbsABC involved in ribose import. Responsible for energy coupling to the transport system.</text>
</comment>
<comment type="catalytic activity">
    <reaction evidence="1">
        <text>D-ribose(out) + ATP + H2O = D-ribose(in) + ADP + phosphate + H(+)</text>
        <dbReference type="Rhea" id="RHEA:29903"/>
        <dbReference type="ChEBI" id="CHEBI:15377"/>
        <dbReference type="ChEBI" id="CHEBI:15378"/>
        <dbReference type="ChEBI" id="CHEBI:30616"/>
        <dbReference type="ChEBI" id="CHEBI:43474"/>
        <dbReference type="ChEBI" id="CHEBI:47013"/>
        <dbReference type="ChEBI" id="CHEBI:456216"/>
        <dbReference type="EC" id="7.5.2.7"/>
    </reaction>
</comment>
<comment type="subunit">
    <text evidence="1">The complex is composed of an ATP-binding protein (RbsA), two transmembrane proteins (RbsC) and a solute-binding protein (RbsB).</text>
</comment>
<comment type="subcellular location">
    <subcellularLocation>
        <location evidence="1">Cell inner membrane</location>
        <topology evidence="1">Peripheral membrane protein</topology>
    </subcellularLocation>
</comment>
<comment type="similarity">
    <text evidence="1">Belongs to the ABC transporter superfamily. Ribose importer (TC 3.A.1.2.1) family.</text>
</comment>
<dbReference type="EC" id="7.5.2.7" evidence="1"/>
<dbReference type="EMBL" id="CP000057">
    <property type="protein sequence ID" value="AAX87553.1"/>
    <property type="molecule type" value="Genomic_DNA"/>
</dbReference>
<dbReference type="RefSeq" id="WP_011272089.1">
    <property type="nucleotide sequence ID" value="NC_007146.2"/>
</dbReference>
<dbReference type="SMR" id="Q4QN44"/>
<dbReference type="GeneID" id="93219513"/>
<dbReference type="KEGG" id="hit:NTHI0630"/>
<dbReference type="HOGENOM" id="CLU_000604_92_3_6"/>
<dbReference type="Proteomes" id="UP000002525">
    <property type="component" value="Chromosome"/>
</dbReference>
<dbReference type="GO" id="GO:0005886">
    <property type="term" value="C:plasma membrane"/>
    <property type="evidence" value="ECO:0007669"/>
    <property type="project" value="UniProtKB-SubCell"/>
</dbReference>
<dbReference type="GO" id="GO:0015611">
    <property type="term" value="F:ABC-type D-ribose transporter activity"/>
    <property type="evidence" value="ECO:0007669"/>
    <property type="project" value="UniProtKB-EC"/>
</dbReference>
<dbReference type="GO" id="GO:0005524">
    <property type="term" value="F:ATP binding"/>
    <property type="evidence" value="ECO:0007669"/>
    <property type="project" value="UniProtKB-KW"/>
</dbReference>
<dbReference type="GO" id="GO:0016887">
    <property type="term" value="F:ATP hydrolysis activity"/>
    <property type="evidence" value="ECO:0007669"/>
    <property type="project" value="InterPro"/>
</dbReference>
<dbReference type="CDD" id="cd03216">
    <property type="entry name" value="ABC_Carb_Monos_I"/>
    <property type="match status" value="1"/>
</dbReference>
<dbReference type="CDD" id="cd03215">
    <property type="entry name" value="ABC_Carb_Monos_II"/>
    <property type="match status" value="1"/>
</dbReference>
<dbReference type="FunFam" id="3.40.50.300:FF:000126">
    <property type="entry name" value="Galactose/methyl galactoside import ATP-binding protein MglA"/>
    <property type="match status" value="1"/>
</dbReference>
<dbReference type="FunFam" id="3.40.50.300:FF:000127">
    <property type="entry name" value="Ribose import ATP-binding protein RbsA"/>
    <property type="match status" value="1"/>
</dbReference>
<dbReference type="Gene3D" id="3.40.50.300">
    <property type="entry name" value="P-loop containing nucleotide triphosphate hydrolases"/>
    <property type="match status" value="2"/>
</dbReference>
<dbReference type="InterPro" id="IPR003593">
    <property type="entry name" value="AAA+_ATPase"/>
</dbReference>
<dbReference type="InterPro" id="IPR050107">
    <property type="entry name" value="ABC_carbohydrate_import_ATPase"/>
</dbReference>
<dbReference type="InterPro" id="IPR003439">
    <property type="entry name" value="ABC_transporter-like_ATP-bd"/>
</dbReference>
<dbReference type="InterPro" id="IPR017871">
    <property type="entry name" value="ABC_transporter-like_CS"/>
</dbReference>
<dbReference type="InterPro" id="IPR027417">
    <property type="entry name" value="P-loop_NTPase"/>
</dbReference>
<dbReference type="NCBIfam" id="NF008030">
    <property type="entry name" value="PRK10762.1"/>
    <property type="match status" value="1"/>
</dbReference>
<dbReference type="PANTHER" id="PTHR43790">
    <property type="entry name" value="CARBOHYDRATE TRANSPORT ATP-BINDING PROTEIN MG119-RELATED"/>
    <property type="match status" value="1"/>
</dbReference>
<dbReference type="PANTHER" id="PTHR43790:SF3">
    <property type="entry name" value="D-ALLOSE IMPORT ATP-BINDING PROTEIN ALSA-RELATED"/>
    <property type="match status" value="1"/>
</dbReference>
<dbReference type="Pfam" id="PF00005">
    <property type="entry name" value="ABC_tran"/>
    <property type="match status" value="2"/>
</dbReference>
<dbReference type="SMART" id="SM00382">
    <property type="entry name" value="AAA"/>
    <property type="match status" value="2"/>
</dbReference>
<dbReference type="SUPFAM" id="SSF52540">
    <property type="entry name" value="P-loop containing nucleoside triphosphate hydrolases"/>
    <property type="match status" value="2"/>
</dbReference>
<dbReference type="PROSITE" id="PS00211">
    <property type="entry name" value="ABC_TRANSPORTER_1"/>
    <property type="match status" value="1"/>
</dbReference>
<dbReference type="PROSITE" id="PS50893">
    <property type="entry name" value="ABC_TRANSPORTER_2"/>
    <property type="match status" value="2"/>
</dbReference>
<dbReference type="PROSITE" id="PS51254">
    <property type="entry name" value="RBSA"/>
    <property type="match status" value="1"/>
</dbReference>
<feature type="chain" id="PRO_0000261069" description="Ribose import ATP-binding protein RbsA">
    <location>
        <begin position="1"/>
        <end position="493"/>
    </location>
</feature>
<feature type="domain" description="ABC transporter 1" evidence="1">
    <location>
        <begin position="5"/>
        <end position="241"/>
    </location>
</feature>
<feature type="domain" description="ABC transporter 2" evidence="1">
    <location>
        <begin position="252"/>
        <end position="491"/>
    </location>
</feature>
<feature type="binding site" evidence="1">
    <location>
        <begin position="37"/>
        <end position="44"/>
    </location>
    <ligand>
        <name>ATP</name>
        <dbReference type="ChEBI" id="CHEBI:30616"/>
    </ligand>
</feature>
<name>RBSA_HAEI8</name>
<reference key="1">
    <citation type="journal article" date="2005" name="J. Bacteriol.">
        <title>Genomic sequence of an otitis media isolate of nontypeable Haemophilus influenzae: comparative study with H. influenzae serotype d, strain KW20.</title>
        <authorList>
            <person name="Harrison A."/>
            <person name="Dyer D.W."/>
            <person name="Gillaspy A."/>
            <person name="Ray W.C."/>
            <person name="Mungur R."/>
            <person name="Carson M.B."/>
            <person name="Zhong H."/>
            <person name="Gipson J."/>
            <person name="Gipson M."/>
            <person name="Johnson L.S."/>
            <person name="Lewis L."/>
            <person name="Bakaletz L.O."/>
            <person name="Munson R.S. Jr."/>
        </authorList>
    </citation>
    <scope>NUCLEOTIDE SEQUENCE [LARGE SCALE GENOMIC DNA]</scope>
    <source>
        <strain>86-028NP</strain>
    </source>
</reference>
<evidence type="ECO:0000255" key="1">
    <source>
        <dbReference type="HAMAP-Rule" id="MF_01716"/>
    </source>
</evidence>
<accession>Q4QN44</accession>
<proteinExistence type="inferred from homology"/>
<organism>
    <name type="scientific">Haemophilus influenzae (strain 86-028NP)</name>
    <dbReference type="NCBI Taxonomy" id="281310"/>
    <lineage>
        <taxon>Bacteria</taxon>
        <taxon>Pseudomonadati</taxon>
        <taxon>Pseudomonadota</taxon>
        <taxon>Gammaproteobacteria</taxon>
        <taxon>Pasteurellales</taxon>
        <taxon>Pasteurellaceae</taxon>
        <taxon>Haemophilus</taxon>
    </lineage>
</organism>
<keyword id="KW-0067">ATP-binding</keyword>
<keyword id="KW-0997">Cell inner membrane</keyword>
<keyword id="KW-1003">Cell membrane</keyword>
<keyword id="KW-0472">Membrane</keyword>
<keyword id="KW-0547">Nucleotide-binding</keyword>
<keyword id="KW-0677">Repeat</keyword>
<keyword id="KW-0762">Sugar transport</keyword>
<keyword id="KW-1278">Translocase</keyword>
<keyword id="KW-0813">Transport</keyword>
<sequence>METLLKISGVDKSFPGVKALNNACLSVYAGRVMALMGENGAGKSTLMKVLTGIYSKDAGTIEYLNRSVNFNGPKASQEAGISIIHQELNLVGNLTIAENIFLGREFKTSWGAINWQKMHQEADKLLARLGVTHSSKQLCAELSIGEQQMVEIAKALSFESKVIIMDEPTDALTDTETEALFNVIRELKAENRGIVYISHRLKEIFQICDDVTVLRDGQFIGERIVAEITEDDLIEMMVGRRLDEQYPHLSQEKGECVLDVKNVSGSGIDDVSFKLHAGEIVGVSGLMGAGRTELGKLLYGALPKTAGKVRLKNQEIENLSPQDGLDNGIVYISEDRKGDGLVLGMSVKENMSLTSLDHFSQKGSIRHQAEKMTVDDFILMFNIKTPNRDQQVGLLSGGNQQKVAIARGLMTRPNVLILDEPTRGVDVGAKKEIYQLINEFKKEGLSILMISSDMPEVLGMSDRVLVMREGKISAEFSRKDATQEKLLAAAIGK</sequence>
<protein>
    <recommendedName>
        <fullName evidence="1">Ribose import ATP-binding protein RbsA</fullName>
        <ecNumber evidence="1">7.5.2.7</ecNumber>
    </recommendedName>
</protein>
<gene>
    <name evidence="1" type="primary">rbsA</name>
    <name type="ordered locus">NTHI0630</name>
</gene>